<reference key="1">
    <citation type="journal article" date="2000" name="Nature">
        <title>Complete genome sequence of Pseudomonas aeruginosa PAO1, an opportunistic pathogen.</title>
        <authorList>
            <person name="Stover C.K."/>
            <person name="Pham X.-Q.T."/>
            <person name="Erwin A.L."/>
            <person name="Mizoguchi S.D."/>
            <person name="Warrener P."/>
            <person name="Hickey M.J."/>
            <person name="Brinkman F.S.L."/>
            <person name="Hufnagle W.O."/>
            <person name="Kowalik D.J."/>
            <person name="Lagrou M."/>
            <person name="Garber R.L."/>
            <person name="Goltry L."/>
            <person name="Tolentino E."/>
            <person name="Westbrock-Wadman S."/>
            <person name="Yuan Y."/>
            <person name="Brody L.L."/>
            <person name="Coulter S.N."/>
            <person name="Folger K.R."/>
            <person name="Kas A."/>
            <person name="Larbig K."/>
            <person name="Lim R.M."/>
            <person name="Smith K.A."/>
            <person name="Spencer D.H."/>
            <person name="Wong G.K.-S."/>
            <person name="Wu Z."/>
            <person name="Paulsen I.T."/>
            <person name="Reizer J."/>
            <person name="Saier M.H. Jr."/>
            <person name="Hancock R.E.W."/>
            <person name="Lory S."/>
            <person name="Olson M.V."/>
        </authorList>
    </citation>
    <scope>NUCLEOTIDE SEQUENCE [LARGE SCALE GENOMIC DNA]</scope>
    <source>
        <strain>ATCC 15692 / DSM 22644 / CIP 104116 / JCM 14847 / LMG 12228 / 1C / PRS 101 / PAO1</strain>
    </source>
</reference>
<reference key="2">
    <citation type="journal article" date="1990" name="J. Bacteriol.">
        <title>Identification and characterization of genes for a second anthranilate synthase in Pseudomonas aeruginosa: interchangeability of the two anthranilate synthases and evolutionary implications.</title>
        <authorList>
            <person name="Essar D.W."/>
            <person name="Eberly L."/>
            <person name="Hadero A."/>
            <person name="Crawford I.P."/>
        </authorList>
    </citation>
    <scope>NUCLEOTIDE SEQUENCE [GENOMIC DNA] OF 109-337</scope>
    <source>
        <strain>ATCC 15692 / DSM 22644 / CIP 104116 / JCM 14847 / LMG 12228 / 1C / PRS 101 / PAO1</strain>
    </source>
</reference>
<reference key="3">
    <citation type="journal article" date="2008" name="J. Biol. Chem.">
        <title>PqsD is responsible for the synthesis of 2,4-dihydroxyquinoline, an extracellular metabolite produced by Pseudomonas aeruginosa.</title>
        <authorList>
            <person name="Zhang Y.M."/>
            <person name="Frank M.W."/>
            <person name="Zhu K."/>
            <person name="Mayasundari A."/>
            <person name="Rock C.O."/>
        </authorList>
    </citation>
    <scope>FUNCTION</scope>
    <scope>ACTIVE SITE</scope>
    <scope>IDENTIFICATION BY MASS SPECTROMETRY</scope>
    <scope>DISRUPTION PHENOTYPE</scope>
    <scope>CATALYTIC ACTIVITY</scope>
    <scope>BIOPHYSICOCHEMICAL PROPERTIES</scope>
    <source>
        <strain evidence="6">ATCC 15692 / DSM 22644 / CIP 104116 / JCM 14847 / LMG 12228 / 1C / PRS 101 / PAO1</strain>
    </source>
</reference>
<reference key="4">
    <citation type="journal article" date="2011" name="ChemBioChem">
        <title>Biosynthesis of 2-Alkyl-4(1H)-quinolones in Pseudomonas aeruginosa: potential for therapeutic interference with pathogenicity.</title>
        <authorList>
            <person name="Pistorius D."/>
            <person name="Ullrich A."/>
            <person name="Lucas S."/>
            <person name="Hartmann R.W."/>
            <person name="Kazmaier U."/>
            <person name="Mueller R."/>
        </authorList>
    </citation>
    <scope>FUNCTION</scope>
    <scope>CATALYTIC ACTIVITY</scope>
    <scope>BIOPHYSICOCHEMICAL PROPERTIES</scope>
</reference>
<reference key="5">
    <citation type="journal article" date="2012" name="J. Am. Chem. Soc.">
        <title>Validation of PqsD as an anti-biofilm target in Pseudomonas aeruginosa by development of small-molecule inhibitors.</title>
        <authorList>
            <person name="Storz M.P."/>
            <person name="Maurer C.K."/>
            <person name="Zimmer C."/>
            <person name="Wagner N."/>
            <person name="Brengel C."/>
            <person name="de Jong J.C."/>
            <person name="Lucas S."/>
            <person name="Muesken M."/>
            <person name="Haeussler S."/>
            <person name="Steinbach A."/>
            <person name="Hartmann R.W."/>
        </authorList>
    </citation>
    <scope>FUNCTION</scope>
    <scope>CATALYTIC ACTIVITY</scope>
</reference>
<reference key="6">
    <citation type="journal article" date="2013" name="Chem. Biol.">
        <title>The end of an old hypothesis: the Pseudomonas signaling molecules 4-hydroxy-2-alkylquinolines derive from fatty acids, not 3-ketofatty acids.</title>
        <authorList>
            <person name="Dulcey C.E."/>
            <person name="Dekimpe V."/>
            <person name="Fauvelle D.A."/>
            <person name="Milot S."/>
            <person name="Groleau M.C."/>
            <person name="Doucet N."/>
            <person name="Rahme L.G."/>
            <person name="Lepine F."/>
            <person name="Deziel E."/>
        </authorList>
    </citation>
    <scope>FUNCTION</scope>
    <scope>CATALYTIC ACTIVITY</scope>
</reference>
<reference key="7">
    <citation type="journal article" date="2009" name="Biochemistry">
        <title>Structure of PqsD, a Pseudomonas quinolone signal biosynthetic enzyme, in complex with anthranilate.</title>
        <authorList>
            <person name="Bera A.K."/>
            <person name="Atanasova V."/>
            <person name="Robinson H."/>
            <person name="Eisenstein E."/>
            <person name="Coleman J.P."/>
            <person name="Pesci E.C."/>
            <person name="Parsons J.F."/>
        </authorList>
    </citation>
    <scope>X-RAY CRYSTALLOGRAPHY (1.70 ANGSTROMS) OF 2-337 IN COMPLEX WITH ANTHRANILOYL-COA</scope>
    <scope>FUNCTION</scope>
    <scope>CATALYTIC ACTIVITY</scope>
    <scope>SUBUNIT</scope>
    <scope>MUTAGENESIS OF CYS-113</scope>
    <scope>ACTIVE SITE</scope>
</reference>
<comment type="function">
    <text evidence="1 2 3 4 5">Required for the biosynthesis of a number of signaling molecules, such as the quinolone signal 2-heptyl-3-hydroxy-4(1H)-quinolone (PQS), 2-heptyl-4-hydroxyquinoline (HHQ) and 2,4-dihydroxyquinoline (DHQ). These molecules are required for normal biofilm formation. Catalyzes the transfer of the anthraniloyl moiety from anthraniloyl-CoA to malonyl-CoA to form 2-aminobenzoylacetyl-CoA (PubMed:24239007). The first step of the reaction is the formation of a covalent anthraniloyl-PqsD intermediate (PubMed:18728009, PubMed:19694421). Next, the short-lived intermediate 3-(2-aminophenyl)-3-oxopropanoyl-CoA is formed. An intramolecular rearrangement of this intermediate can give rise to 2,4-dihydroxyquinoline (DHQ).</text>
</comment>
<comment type="catalytic activity">
    <reaction evidence="1 2 3 4 5">
        <text>anthraniloyl-CoA + malonyl-CoA + H(+) = (2-aminobenzoyl)acetyl-CoA + CO2 + CoA</text>
        <dbReference type="Rhea" id="RHEA:50472"/>
        <dbReference type="ChEBI" id="CHEBI:15378"/>
        <dbReference type="ChEBI" id="CHEBI:16526"/>
        <dbReference type="ChEBI" id="CHEBI:57287"/>
        <dbReference type="ChEBI" id="CHEBI:57331"/>
        <dbReference type="ChEBI" id="CHEBI:57384"/>
        <dbReference type="ChEBI" id="CHEBI:131447"/>
        <dbReference type="EC" id="2.3.1.262"/>
    </reaction>
</comment>
<comment type="biophysicochemical properties">
    <kinetics>
        <KM evidence="1">35 uM for anthraniloyl-CoA</KM>
        <KM evidence="1">104 uM for malonyl-CoA</KM>
        <KM evidence="3">48.7 uM for malonyl-CoA</KM>
        <KM evidence="1">18 uM for malonyl-ACP</KM>
    </kinetics>
</comment>
<comment type="subunit">
    <text evidence="2">Homodimer.</text>
</comment>
<comment type="subcellular location">
    <subcellularLocation>
        <location evidence="7">Cytoplasm</location>
    </subcellularLocation>
</comment>
<comment type="disruption phenotype">
    <text evidence="1">Abolishes the biosynthesis of the signaling molecules 2-heptyl-3-hydroxy-4(1H)-quinolone (PQS), 2-heptyl-4-hydroxyquinoline (HHQ) and 2,4-dihydroxyquinoline (DHQ).</text>
</comment>
<comment type="similarity">
    <text evidence="7">Belongs to the thiolase-like superfamily. FabH family.</text>
</comment>
<gene>
    <name type="primary">pqsD</name>
    <name type="ordered locus">PA0999</name>
</gene>
<proteinExistence type="evidence at protein level"/>
<accession>P20582</accession>
<evidence type="ECO:0000269" key="1">
    <source>
    </source>
</evidence>
<evidence type="ECO:0000269" key="2">
    <source>
    </source>
</evidence>
<evidence type="ECO:0000269" key="3">
    <source>
    </source>
</evidence>
<evidence type="ECO:0000269" key="4">
    <source>
    </source>
</evidence>
<evidence type="ECO:0000269" key="5">
    <source>
    </source>
</evidence>
<evidence type="ECO:0000303" key="6">
    <source>
    </source>
</evidence>
<evidence type="ECO:0000305" key="7"/>
<evidence type="ECO:0007829" key="8">
    <source>
        <dbReference type="PDB" id="3H76"/>
    </source>
</evidence>
<evidence type="ECO:0007829" key="9">
    <source>
        <dbReference type="PDB" id="3H78"/>
    </source>
</evidence>
<sequence>MGNPILAGLGFSLPKRQVSNHDLVGRINTSDEFIVERTGVRTRYHVEPEQAVSALMVPAARQAIEAAGLLPEDIDLLLVNTLSPDHHDPSQACLIQPLLGLRHIPVLDIRAQCSGLLYGLQMARGQILAGLARHVLVVCGEVLSKRMDCSDRGRNLSILLGDGAGAVVVSAGESLEDGLLDLRLGADGNYFDLLMTAAPGSASPTFLDENVLREGGGEFLMRGRPMFEHASQTLVRIAGEMLAAHELTLDDIDHVICHQPNLRILDAVQEQLGIPQHKFAVTVDRLGNMASASTPVTLAMFWPDIQPGQRVLVLTYGSGATWGAALYRKPEEVNRPC</sequence>
<name>PQSD_PSEAE</name>
<protein>
    <recommendedName>
        <fullName evidence="7">Anthraniloyl-CoA anthraniloyltransferase</fullName>
        <ecNumber evidence="1 2 3 4">2.3.1.262</ecNumber>
    </recommendedName>
    <alternativeName>
        <fullName evidence="7">2-heptyl-4(1H)-quinolone synthase PqsD</fullName>
        <shortName evidence="7">PqsD</shortName>
    </alternativeName>
</protein>
<dbReference type="EC" id="2.3.1.262" evidence="1 2 3 4"/>
<dbReference type="EMBL" id="AE004091">
    <property type="protein sequence ID" value="AAG04388.1"/>
    <property type="molecule type" value="Genomic_DNA"/>
</dbReference>
<dbReference type="EMBL" id="M33810">
    <property type="protein sequence ID" value="AAA88446.1"/>
    <property type="molecule type" value="Genomic_DNA"/>
</dbReference>
<dbReference type="PIR" id="B83522">
    <property type="entry name" value="B83522"/>
</dbReference>
<dbReference type="PIR" id="D35116">
    <property type="entry name" value="D35116"/>
</dbReference>
<dbReference type="RefSeq" id="NP_249690.1">
    <property type="nucleotide sequence ID" value="NC_002516.2"/>
</dbReference>
<dbReference type="RefSeq" id="WP_003112550.1">
    <property type="nucleotide sequence ID" value="NZ_QZGE01000006.1"/>
</dbReference>
<dbReference type="PDB" id="3H76">
    <property type="method" value="X-ray"/>
    <property type="resolution" value="1.80 A"/>
    <property type="chains" value="A/B=2-337"/>
</dbReference>
<dbReference type="PDB" id="3H77">
    <property type="method" value="X-ray"/>
    <property type="resolution" value="1.80 A"/>
    <property type="chains" value="A/B=2-337"/>
</dbReference>
<dbReference type="PDB" id="3H78">
    <property type="method" value="X-ray"/>
    <property type="resolution" value="1.70 A"/>
    <property type="chains" value="A/B=2-337"/>
</dbReference>
<dbReference type="PDBsum" id="3H76"/>
<dbReference type="PDBsum" id="3H77"/>
<dbReference type="PDBsum" id="3H78"/>
<dbReference type="SMR" id="P20582"/>
<dbReference type="STRING" id="208964.PA0999"/>
<dbReference type="PaxDb" id="208964-PA0999"/>
<dbReference type="DNASU" id="880625"/>
<dbReference type="GeneID" id="880625"/>
<dbReference type="KEGG" id="pae:PA0999"/>
<dbReference type="PATRIC" id="fig|208964.12.peg.1031"/>
<dbReference type="PseudoCAP" id="PA0999"/>
<dbReference type="HOGENOM" id="CLU_039592_4_1_6"/>
<dbReference type="InParanoid" id="P20582"/>
<dbReference type="OrthoDB" id="8771453at2"/>
<dbReference type="PhylomeDB" id="P20582"/>
<dbReference type="BioCyc" id="MetaCyc:MONOMER-16011"/>
<dbReference type="BioCyc" id="PAER208964:G1FZ6-1018-MONOMER"/>
<dbReference type="BRENDA" id="2.3.1.230">
    <property type="organism ID" value="5087"/>
</dbReference>
<dbReference type="BRENDA" id="2.3.1.262">
    <property type="organism ID" value="5087"/>
</dbReference>
<dbReference type="SABIO-RK" id="P20582"/>
<dbReference type="EvolutionaryTrace" id="P20582"/>
<dbReference type="PHI-base" id="PHI:3522"/>
<dbReference type="Proteomes" id="UP000002438">
    <property type="component" value="Chromosome"/>
</dbReference>
<dbReference type="GO" id="GO:0005737">
    <property type="term" value="C:cytoplasm"/>
    <property type="evidence" value="ECO:0007669"/>
    <property type="project" value="UniProtKB-SubCell"/>
</dbReference>
<dbReference type="GO" id="GO:0004315">
    <property type="term" value="F:3-oxoacyl-[acyl-carrier-protein] synthase activity"/>
    <property type="evidence" value="ECO:0007669"/>
    <property type="project" value="InterPro"/>
</dbReference>
<dbReference type="GO" id="GO:0016746">
    <property type="term" value="F:acyltransferase activity"/>
    <property type="evidence" value="ECO:0000314"/>
    <property type="project" value="UniProtKB"/>
</dbReference>
<dbReference type="GO" id="GO:0006633">
    <property type="term" value="P:fatty acid biosynthetic process"/>
    <property type="evidence" value="ECO:0007669"/>
    <property type="project" value="InterPro"/>
</dbReference>
<dbReference type="GO" id="GO:0044550">
    <property type="term" value="P:secondary metabolite biosynthetic process"/>
    <property type="evidence" value="ECO:0000314"/>
    <property type="project" value="UniProtKB"/>
</dbReference>
<dbReference type="CDD" id="cd00830">
    <property type="entry name" value="KAS_III"/>
    <property type="match status" value="1"/>
</dbReference>
<dbReference type="FunFam" id="3.40.47.10:FF:000119">
    <property type="entry name" value="Anthraniloyl-CoA anthraniloyltransferase"/>
    <property type="match status" value="1"/>
</dbReference>
<dbReference type="Gene3D" id="3.40.47.10">
    <property type="match status" value="2"/>
</dbReference>
<dbReference type="InterPro" id="IPR013747">
    <property type="entry name" value="ACP_syn_III_C"/>
</dbReference>
<dbReference type="InterPro" id="IPR013751">
    <property type="entry name" value="ACP_syn_III_N"/>
</dbReference>
<dbReference type="InterPro" id="IPR016039">
    <property type="entry name" value="Thiolase-like"/>
</dbReference>
<dbReference type="NCBIfam" id="NF006829">
    <property type="entry name" value="PRK09352.1"/>
    <property type="match status" value="1"/>
</dbReference>
<dbReference type="PANTHER" id="PTHR34069">
    <property type="entry name" value="3-OXOACYL-[ACYL-CARRIER-PROTEIN] SYNTHASE 3"/>
    <property type="match status" value="1"/>
</dbReference>
<dbReference type="PANTHER" id="PTHR34069:SF2">
    <property type="entry name" value="BETA-KETOACYL-[ACYL-CARRIER-PROTEIN] SYNTHASE III"/>
    <property type="match status" value="1"/>
</dbReference>
<dbReference type="Pfam" id="PF08545">
    <property type="entry name" value="ACP_syn_III"/>
    <property type="match status" value="1"/>
</dbReference>
<dbReference type="Pfam" id="PF08541">
    <property type="entry name" value="ACP_syn_III_C"/>
    <property type="match status" value="1"/>
</dbReference>
<dbReference type="SUPFAM" id="SSF53901">
    <property type="entry name" value="Thiolase-like"/>
    <property type="match status" value="1"/>
</dbReference>
<organism>
    <name type="scientific">Pseudomonas aeruginosa (strain ATCC 15692 / DSM 22644 / CIP 104116 / JCM 14847 / LMG 12228 / 1C / PRS 101 / PAO1)</name>
    <dbReference type="NCBI Taxonomy" id="208964"/>
    <lineage>
        <taxon>Bacteria</taxon>
        <taxon>Pseudomonadati</taxon>
        <taxon>Pseudomonadota</taxon>
        <taxon>Gammaproteobacteria</taxon>
        <taxon>Pseudomonadales</taxon>
        <taxon>Pseudomonadaceae</taxon>
        <taxon>Pseudomonas</taxon>
    </lineage>
</organism>
<keyword id="KW-0002">3D-structure</keyword>
<keyword id="KW-0012">Acyltransferase</keyword>
<keyword id="KW-0963">Cytoplasm</keyword>
<keyword id="KW-1185">Reference proteome</keyword>
<keyword id="KW-0808">Transferase</keyword>
<feature type="chain" id="PRO_0000110519" description="Anthraniloyl-CoA anthraniloyltransferase">
    <location>
        <begin position="1"/>
        <end position="337"/>
    </location>
</feature>
<feature type="active site" description="Acyl-thioester intermediate" evidence="1 2">
    <location>
        <position position="113"/>
    </location>
</feature>
<feature type="binding site" evidence="2">
    <location>
        <position position="29"/>
    </location>
    <ligand>
        <name>anthraniloyl-CoA</name>
        <dbReference type="ChEBI" id="CHEBI:57331"/>
    </ligand>
</feature>
<feature type="binding site" evidence="2">
    <location>
        <position position="33"/>
    </location>
    <ligand>
        <name>anthraniloyl-CoA</name>
        <dbReference type="ChEBI" id="CHEBI:57331"/>
    </ligand>
</feature>
<feature type="binding site" evidence="2">
    <location>
        <begin position="154"/>
        <end position="155"/>
    </location>
    <ligand>
        <name>anthraniloyl-CoA</name>
        <dbReference type="ChEBI" id="CHEBI:57331"/>
    </ligand>
</feature>
<feature type="binding site" evidence="2">
    <location>
        <begin position="221"/>
        <end position="224"/>
    </location>
    <ligand>
        <name>anthraniloyl-CoA</name>
        <dbReference type="ChEBI" id="CHEBI:57331"/>
    </ligand>
</feature>
<feature type="binding site" evidence="2">
    <location>
        <position position="258"/>
    </location>
    <ligand>
        <name>anthraniloyl-CoA</name>
        <dbReference type="ChEBI" id="CHEBI:57331"/>
    </ligand>
</feature>
<feature type="mutagenesis site" description="Abolishes enzyme activity." evidence="2">
    <original>C</original>
    <variation>A</variation>
    <location>
        <position position="113"/>
    </location>
</feature>
<feature type="strand" evidence="9">
    <location>
        <begin position="5"/>
        <end position="12"/>
    </location>
</feature>
<feature type="strand" evidence="9">
    <location>
        <begin position="15"/>
        <end position="19"/>
    </location>
</feature>
<feature type="helix" evidence="9">
    <location>
        <begin position="20"/>
        <end position="23"/>
    </location>
</feature>
<feature type="turn" evidence="9">
    <location>
        <begin position="24"/>
        <end position="26"/>
    </location>
</feature>
<feature type="helix" evidence="9">
    <location>
        <begin position="31"/>
        <end position="38"/>
    </location>
</feature>
<feature type="strand" evidence="9">
    <location>
        <begin position="42"/>
        <end position="45"/>
    </location>
</feature>
<feature type="helix" evidence="9">
    <location>
        <begin position="53"/>
        <end position="66"/>
    </location>
</feature>
<feature type="helix" evidence="9">
    <location>
        <begin position="71"/>
        <end position="73"/>
    </location>
</feature>
<feature type="strand" evidence="9">
    <location>
        <begin position="76"/>
        <end position="80"/>
    </location>
</feature>
<feature type="strand" evidence="9">
    <location>
        <begin position="85"/>
        <end position="89"/>
    </location>
</feature>
<feature type="helix" evidence="9">
    <location>
        <begin position="91"/>
        <end position="99"/>
    </location>
</feature>
<feature type="strand" evidence="9">
    <location>
        <begin position="106"/>
        <end position="110"/>
    </location>
</feature>
<feature type="helix" evidence="9">
    <location>
        <begin position="112"/>
        <end position="114"/>
    </location>
</feature>
<feature type="helix" evidence="9">
    <location>
        <begin position="115"/>
        <end position="128"/>
    </location>
</feature>
<feature type="strand" evidence="9">
    <location>
        <begin position="133"/>
        <end position="142"/>
    </location>
</feature>
<feature type="helix" evidence="9">
    <location>
        <begin position="144"/>
        <end position="146"/>
    </location>
</feature>
<feature type="turn" evidence="9">
    <location>
        <begin position="151"/>
        <end position="153"/>
    </location>
</feature>
<feature type="helix" evidence="9">
    <location>
        <begin position="154"/>
        <end position="157"/>
    </location>
</feature>
<feature type="strand" evidence="9">
    <location>
        <begin position="162"/>
        <end position="170"/>
    </location>
</feature>
<feature type="strand" evidence="9">
    <location>
        <begin position="175"/>
        <end position="186"/>
    </location>
</feature>
<feature type="helix" evidence="9">
    <location>
        <begin position="188"/>
        <end position="193"/>
    </location>
</feature>
<feature type="strand" evidence="9">
    <location>
        <begin position="194"/>
        <end position="196"/>
    </location>
</feature>
<feature type="strand" evidence="9">
    <location>
        <begin position="203"/>
        <end position="205"/>
    </location>
</feature>
<feature type="helix" evidence="9">
    <location>
        <begin position="209"/>
        <end position="213"/>
    </location>
</feature>
<feature type="turn" evidence="9">
    <location>
        <begin position="214"/>
        <end position="217"/>
    </location>
</feature>
<feature type="strand" evidence="8">
    <location>
        <begin position="218"/>
        <end position="221"/>
    </location>
</feature>
<feature type="helix" evidence="9">
    <location>
        <begin position="223"/>
        <end position="244"/>
    </location>
</feature>
<feature type="helix" evidence="9">
    <location>
        <begin position="249"/>
        <end position="251"/>
    </location>
</feature>
<feature type="strand" evidence="9">
    <location>
        <begin position="253"/>
        <end position="257"/>
    </location>
</feature>
<feature type="helix" evidence="9">
    <location>
        <begin position="262"/>
        <end position="272"/>
    </location>
</feature>
<feature type="helix" evidence="9">
    <location>
        <begin position="276"/>
        <end position="278"/>
    </location>
</feature>
<feature type="helix" evidence="9">
    <location>
        <begin position="283"/>
        <end position="286"/>
    </location>
</feature>
<feature type="helix" evidence="9">
    <location>
        <begin position="290"/>
        <end position="292"/>
    </location>
</feature>
<feature type="helix" evidence="9">
    <location>
        <begin position="293"/>
        <end position="301"/>
    </location>
</feature>
<feature type="helix" evidence="9">
    <location>
        <begin position="302"/>
        <end position="304"/>
    </location>
</feature>
<feature type="strand" evidence="9">
    <location>
        <begin position="310"/>
        <end position="317"/>
    </location>
</feature>
<feature type="turn" evidence="9">
    <location>
        <begin position="318"/>
        <end position="320"/>
    </location>
</feature>
<feature type="strand" evidence="9">
    <location>
        <begin position="321"/>
        <end position="328"/>
    </location>
</feature>